<reference key="1">
    <citation type="journal article" date="1999" name="Genetics">
        <title>Divergence of the hyperthermophilic archaea Pyrococcus furiosus and P. horikoshii inferred from complete genomic sequences.</title>
        <authorList>
            <person name="Maeder D.L."/>
            <person name="Weiss R.B."/>
            <person name="Dunn D.M."/>
            <person name="Cherry J.L."/>
            <person name="Gonzalez J.M."/>
            <person name="DiRuggiero J."/>
            <person name="Robb F.T."/>
        </authorList>
    </citation>
    <scope>NUCLEOTIDE SEQUENCE [LARGE SCALE GENOMIC DNA]</scope>
    <source>
        <strain>ATCC 43587 / DSM 3638 / JCM 8422 / Vc1</strain>
    </source>
</reference>
<accession>Q8U1B3</accession>
<proteinExistence type="inferred from homology"/>
<dbReference type="EMBL" id="AE009950">
    <property type="protein sequence ID" value="AAL81432.1"/>
    <property type="molecule type" value="Genomic_DNA"/>
</dbReference>
<dbReference type="RefSeq" id="WP_011012452.1">
    <property type="nucleotide sequence ID" value="NZ_CP023154.1"/>
</dbReference>
<dbReference type="SMR" id="Q8U1B3"/>
<dbReference type="STRING" id="186497.PF1308"/>
<dbReference type="PaxDb" id="186497-PF1308"/>
<dbReference type="KEGG" id="pfu:PF1308"/>
<dbReference type="PATRIC" id="fig|186497.12.peg.1371"/>
<dbReference type="eggNOG" id="arCOG07152">
    <property type="taxonomic scope" value="Archaea"/>
</dbReference>
<dbReference type="HOGENOM" id="CLU_2802425_0_0_2"/>
<dbReference type="PhylomeDB" id="Q8U1B3"/>
<dbReference type="Proteomes" id="UP000001013">
    <property type="component" value="Chromosome"/>
</dbReference>
<dbReference type="SUPFAM" id="SSF141694">
    <property type="entry name" value="AF2212/PG0164-like"/>
    <property type="match status" value="1"/>
</dbReference>
<sequence>MILKPSKPYSFCFTTYPWKKLKLKEHSKVIIKIIDEEEIEKILDSMIIEKVEGIDYKKLKETHYESL</sequence>
<name>Y1308_PYRFU</name>
<evidence type="ECO:0000305" key="1"/>
<comment type="function">
    <text evidence="1">Possibly the antitoxin component of a type II toxin-antitoxin (TA) system.</text>
</comment>
<comment type="similarity">
    <text evidence="1">Belongs to the UPF0165 family.</text>
</comment>
<keyword id="KW-1185">Reference proteome</keyword>
<keyword id="KW-1277">Toxin-antitoxin system</keyword>
<organism>
    <name type="scientific">Pyrococcus furiosus (strain ATCC 43587 / DSM 3638 / JCM 8422 / Vc1)</name>
    <dbReference type="NCBI Taxonomy" id="186497"/>
    <lineage>
        <taxon>Archaea</taxon>
        <taxon>Methanobacteriati</taxon>
        <taxon>Methanobacteriota</taxon>
        <taxon>Thermococci</taxon>
        <taxon>Thermococcales</taxon>
        <taxon>Thermococcaceae</taxon>
        <taxon>Pyrococcus</taxon>
    </lineage>
</organism>
<protein>
    <recommendedName>
        <fullName>Putative antitoxin PF1308</fullName>
    </recommendedName>
</protein>
<gene>
    <name type="ordered locus">PF1308</name>
</gene>
<feature type="chain" id="PRO_0000156863" description="Putative antitoxin PF1308">
    <location>
        <begin position="1"/>
        <end position="67"/>
    </location>
</feature>